<proteinExistence type="inferred from homology"/>
<protein>
    <recommendedName>
        <fullName evidence="1">Thymidylate synthase</fullName>
        <shortName evidence="1">TS</shortName>
        <shortName evidence="1">TSase</shortName>
        <ecNumber evidence="1">2.1.1.45</ecNumber>
    </recommendedName>
</protein>
<accession>Q5NFK5</accession>
<keyword id="KW-0963">Cytoplasm</keyword>
<keyword id="KW-0489">Methyltransferase</keyword>
<keyword id="KW-0545">Nucleotide biosynthesis</keyword>
<keyword id="KW-1185">Reference proteome</keyword>
<keyword id="KW-0808">Transferase</keyword>
<dbReference type="EC" id="2.1.1.45" evidence="1"/>
<dbReference type="EMBL" id="AJ749949">
    <property type="protein sequence ID" value="CAG45862.1"/>
    <property type="molecule type" value="Genomic_DNA"/>
</dbReference>
<dbReference type="RefSeq" id="WP_003021519.1">
    <property type="nucleotide sequence ID" value="NC_006570.2"/>
</dbReference>
<dbReference type="RefSeq" id="YP_170187.1">
    <property type="nucleotide sequence ID" value="NC_006570.2"/>
</dbReference>
<dbReference type="SMR" id="Q5NFK5"/>
<dbReference type="IntAct" id="Q5NFK5">
    <property type="interactions" value="1"/>
</dbReference>
<dbReference type="STRING" id="177416.FTT_1229"/>
<dbReference type="DNASU" id="3190786"/>
<dbReference type="EnsemblBacteria" id="CAG45862">
    <property type="protein sequence ID" value="CAG45862"/>
    <property type="gene ID" value="FTT_1229"/>
</dbReference>
<dbReference type="KEGG" id="ftu:FTT_1229"/>
<dbReference type="eggNOG" id="COG0207">
    <property type="taxonomic scope" value="Bacteria"/>
</dbReference>
<dbReference type="OrthoDB" id="9774633at2"/>
<dbReference type="UniPathway" id="UPA00575"/>
<dbReference type="Proteomes" id="UP000001174">
    <property type="component" value="Chromosome"/>
</dbReference>
<dbReference type="GO" id="GO:0005829">
    <property type="term" value="C:cytosol"/>
    <property type="evidence" value="ECO:0007669"/>
    <property type="project" value="TreeGrafter"/>
</dbReference>
<dbReference type="GO" id="GO:0004799">
    <property type="term" value="F:thymidylate synthase activity"/>
    <property type="evidence" value="ECO:0007669"/>
    <property type="project" value="UniProtKB-UniRule"/>
</dbReference>
<dbReference type="GO" id="GO:0006231">
    <property type="term" value="P:dTMP biosynthetic process"/>
    <property type="evidence" value="ECO:0007669"/>
    <property type="project" value="UniProtKB-UniRule"/>
</dbReference>
<dbReference type="GO" id="GO:0006235">
    <property type="term" value="P:dTTP biosynthetic process"/>
    <property type="evidence" value="ECO:0007669"/>
    <property type="project" value="UniProtKB-UniRule"/>
</dbReference>
<dbReference type="GO" id="GO:0032259">
    <property type="term" value="P:methylation"/>
    <property type="evidence" value="ECO:0007669"/>
    <property type="project" value="UniProtKB-KW"/>
</dbReference>
<dbReference type="CDD" id="cd00351">
    <property type="entry name" value="TS_Pyrimidine_HMase"/>
    <property type="match status" value="1"/>
</dbReference>
<dbReference type="FunFam" id="3.30.572.10:FF:000013">
    <property type="entry name" value="Thymidylate synthase"/>
    <property type="match status" value="1"/>
</dbReference>
<dbReference type="Gene3D" id="3.30.572.10">
    <property type="entry name" value="Thymidylate synthase/dCMP hydroxymethylase domain"/>
    <property type="match status" value="1"/>
</dbReference>
<dbReference type="HAMAP" id="MF_00008">
    <property type="entry name" value="Thymidy_synth_bact"/>
    <property type="match status" value="1"/>
</dbReference>
<dbReference type="InterPro" id="IPR045097">
    <property type="entry name" value="Thymidate_synth/dCMP_Mease"/>
</dbReference>
<dbReference type="InterPro" id="IPR023451">
    <property type="entry name" value="Thymidate_synth/dCMP_Mease_dom"/>
</dbReference>
<dbReference type="InterPro" id="IPR036926">
    <property type="entry name" value="Thymidate_synth/dCMP_Mease_sf"/>
</dbReference>
<dbReference type="InterPro" id="IPR000398">
    <property type="entry name" value="Thymidylate_synthase"/>
</dbReference>
<dbReference type="NCBIfam" id="NF002497">
    <property type="entry name" value="PRK01827.1-3"/>
    <property type="match status" value="1"/>
</dbReference>
<dbReference type="NCBIfam" id="NF002499">
    <property type="entry name" value="PRK01827.1-5"/>
    <property type="match status" value="1"/>
</dbReference>
<dbReference type="NCBIfam" id="TIGR03284">
    <property type="entry name" value="thym_sym"/>
    <property type="match status" value="2"/>
</dbReference>
<dbReference type="PANTHER" id="PTHR11548">
    <property type="entry name" value="THYMIDYLATE SYNTHASE 1"/>
    <property type="match status" value="1"/>
</dbReference>
<dbReference type="PANTHER" id="PTHR11548:SF1">
    <property type="entry name" value="THYMIDYLATE SYNTHASE 1"/>
    <property type="match status" value="1"/>
</dbReference>
<dbReference type="Pfam" id="PF00303">
    <property type="entry name" value="Thymidylat_synt"/>
    <property type="match status" value="1"/>
</dbReference>
<dbReference type="PRINTS" id="PR00108">
    <property type="entry name" value="THYMDSNTHASE"/>
</dbReference>
<dbReference type="SUPFAM" id="SSF55831">
    <property type="entry name" value="Thymidylate synthase/dCMP hydroxymethylase"/>
    <property type="match status" value="1"/>
</dbReference>
<reference key="1">
    <citation type="journal article" date="2005" name="Nat. Genet.">
        <title>The complete genome sequence of Francisella tularensis, the causative agent of tularemia.</title>
        <authorList>
            <person name="Larsson P."/>
            <person name="Oyston P.C.F."/>
            <person name="Chain P."/>
            <person name="Chu M.C."/>
            <person name="Duffield M."/>
            <person name="Fuxelius H.-H."/>
            <person name="Garcia E."/>
            <person name="Haelltorp G."/>
            <person name="Johansson D."/>
            <person name="Isherwood K.E."/>
            <person name="Karp P.D."/>
            <person name="Larsson E."/>
            <person name="Liu Y."/>
            <person name="Michell S."/>
            <person name="Prior J."/>
            <person name="Prior R."/>
            <person name="Malfatti S."/>
            <person name="Sjoestedt A."/>
            <person name="Svensson K."/>
            <person name="Thompson N."/>
            <person name="Vergez L."/>
            <person name="Wagg J.K."/>
            <person name="Wren B.W."/>
            <person name="Lindler L.E."/>
            <person name="Andersson S.G.E."/>
            <person name="Forsman M."/>
            <person name="Titball R.W."/>
        </authorList>
    </citation>
    <scope>NUCLEOTIDE SEQUENCE [LARGE SCALE GENOMIC DNA]</scope>
    <source>
        <strain>SCHU S4 / Schu 4</strain>
    </source>
</reference>
<name>TYSY_FRATT</name>
<comment type="function">
    <text evidence="1">Catalyzes the reductive methylation of 2'-deoxyuridine-5'-monophosphate (dUMP) to 2'-deoxythymidine-5'-monophosphate (dTMP) while utilizing 5,10-methylenetetrahydrofolate (mTHF) as the methyl donor and reductant in the reaction, yielding dihydrofolate (DHF) as a by-product. This enzymatic reaction provides an intracellular de novo source of dTMP, an essential precursor for DNA biosynthesis.</text>
</comment>
<comment type="catalytic activity">
    <reaction evidence="1">
        <text>dUMP + (6R)-5,10-methylene-5,6,7,8-tetrahydrofolate = 7,8-dihydrofolate + dTMP</text>
        <dbReference type="Rhea" id="RHEA:12104"/>
        <dbReference type="ChEBI" id="CHEBI:15636"/>
        <dbReference type="ChEBI" id="CHEBI:57451"/>
        <dbReference type="ChEBI" id="CHEBI:63528"/>
        <dbReference type="ChEBI" id="CHEBI:246422"/>
        <dbReference type="EC" id="2.1.1.45"/>
    </reaction>
</comment>
<comment type="pathway">
    <text evidence="1">Pyrimidine metabolism; dTTP biosynthesis.</text>
</comment>
<comment type="subunit">
    <text evidence="1">Homodimer.</text>
</comment>
<comment type="subcellular location">
    <subcellularLocation>
        <location evidence="1">Cytoplasm</location>
    </subcellularLocation>
</comment>
<comment type="similarity">
    <text evidence="1">Belongs to the thymidylate synthase family. Bacterial-type ThyA subfamily.</text>
</comment>
<feature type="chain" id="PRO_0000140959" description="Thymidylate synthase">
    <location>
        <begin position="1"/>
        <end position="274"/>
    </location>
</feature>
<feature type="active site" description="Nucleophile" evidence="1">
    <location>
        <position position="156"/>
    </location>
</feature>
<feature type="binding site" description="in other chain" evidence="1">
    <location>
        <position position="21"/>
    </location>
    <ligand>
        <name>dUMP</name>
        <dbReference type="ChEBI" id="CHEBI:246422"/>
        <note>ligand shared between dimeric partners</note>
    </ligand>
</feature>
<feature type="binding site" evidence="1">
    <location>
        <position position="51"/>
    </location>
    <ligand>
        <name>(6R)-5,10-methylene-5,6,7,8-tetrahydrofolate</name>
        <dbReference type="ChEBI" id="CHEBI:15636"/>
    </ligand>
</feature>
<feature type="binding site" evidence="1">
    <location>
        <begin position="123"/>
        <end position="124"/>
    </location>
    <ligand>
        <name>dUMP</name>
        <dbReference type="ChEBI" id="CHEBI:246422"/>
        <note>ligand shared between dimeric partners</note>
    </ligand>
</feature>
<feature type="binding site" description="in other chain" evidence="1">
    <location>
        <begin position="176"/>
        <end position="179"/>
    </location>
    <ligand>
        <name>dUMP</name>
        <dbReference type="ChEBI" id="CHEBI:246422"/>
        <note>ligand shared between dimeric partners</note>
    </ligand>
</feature>
<feature type="binding site" evidence="1">
    <location>
        <position position="179"/>
    </location>
    <ligand>
        <name>(6R)-5,10-methylene-5,6,7,8-tetrahydrofolate</name>
        <dbReference type="ChEBI" id="CHEBI:15636"/>
    </ligand>
</feature>
<feature type="binding site" description="in other chain" evidence="1">
    <location>
        <position position="187"/>
    </location>
    <ligand>
        <name>dUMP</name>
        <dbReference type="ChEBI" id="CHEBI:246422"/>
        <note>ligand shared between dimeric partners</note>
    </ligand>
</feature>
<feature type="binding site" description="in other chain" evidence="1">
    <location>
        <begin position="217"/>
        <end position="219"/>
    </location>
    <ligand>
        <name>dUMP</name>
        <dbReference type="ChEBI" id="CHEBI:246422"/>
        <note>ligand shared between dimeric partners</note>
    </ligand>
</feature>
<feature type="binding site" evidence="1">
    <location>
        <position position="273"/>
    </location>
    <ligand>
        <name>(6R)-5,10-methylene-5,6,7,8-tetrahydrofolate</name>
        <dbReference type="ChEBI" id="CHEBI:15636"/>
    </ligand>
</feature>
<organism>
    <name type="scientific">Francisella tularensis subsp. tularensis (strain SCHU S4 / Schu 4)</name>
    <dbReference type="NCBI Taxonomy" id="177416"/>
    <lineage>
        <taxon>Bacteria</taxon>
        <taxon>Pseudomonadati</taxon>
        <taxon>Pseudomonadota</taxon>
        <taxon>Gammaproteobacteria</taxon>
        <taxon>Thiotrichales</taxon>
        <taxon>Francisellaceae</taxon>
        <taxon>Francisella</taxon>
    </lineage>
</organism>
<evidence type="ECO:0000255" key="1">
    <source>
        <dbReference type="HAMAP-Rule" id="MF_00008"/>
    </source>
</evidence>
<sequence length="274" mass="31325">MQEYLNFLKYIKENGVLKGDRTGTGTRSIFGYQMRFDLQKGFPLVTTKKIHIPSVVHELLWFLSGSTNIKYLNDNNVRIWNEWATVDGELGPIYGKQWRDFNGQGIDQIADVIQMLKTNPNSRRILVSAWNPCVVPSEKISPQENVVKGNSALPPCHAMFQFYVANNKLSCMLTQRSADAFLGVPFNIASYSLLTNMVAQQCNLDVGEFIWSGGDCHIYNNHIEQVNEQLSREPLALPTLKILRKPNSIFDYKYEDFEFENYNHHPAIKAKISV</sequence>
<gene>
    <name evidence="1" type="primary">thyA</name>
    <name type="ordered locus">FTT_1229</name>
</gene>